<keyword id="KW-0025">Alternative splicing</keyword>
<keyword id="KW-0217">Developmental protein</keyword>
<keyword id="KW-0221">Differentiation</keyword>
<keyword id="KW-0225">Disease variant</keyword>
<keyword id="KW-0238">DNA-binding</keyword>
<keyword id="KW-1016">Hypogonadotropic hypogonadism</keyword>
<keyword id="KW-0956">Kallmann syndrome</keyword>
<keyword id="KW-0479">Metal-binding</keyword>
<keyword id="KW-0524">Neurogenesis</keyword>
<keyword id="KW-0539">Nucleus</keyword>
<keyword id="KW-1185">Reference proteome</keyword>
<keyword id="KW-0677">Repeat</keyword>
<keyword id="KW-0678">Repressor</keyword>
<keyword id="KW-0804">Transcription</keyword>
<keyword id="KW-0805">Transcription regulation</keyword>
<keyword id="KW-0862">Zinc</keyword>
<keyword id="KW-0863">Zinc-finger</keyword>
<evidence type="ECO:0000250" key="1"/>
<evidence type="ECO:0000255" key="2">
    <source>
        <dbReference type="PROSITE-ProRule" id="PRU00042"/>
    </source>
</evidence>
<evidence type="ECO:0000256" key="3">
    <source>
        <dbReference type="SAM" id="MobiDB-lite"/>
    </source>
</evidence>
<evidence type="ECO:0000269" key="4">
    <source>
    </source>
</evidence>
<evidence type="ECO:0000269" key="5">
    <source>
    </source>
</evidence>
<evidence type="ECO:0000303" key="6">
    <source>
    </source>
</evidence>
<evidence type="ECO:0000305" key="7"/>
<dbReference type="EMBL" id="AK300742">
    <property type="protein sequence ID" value="BAG62411.1"/>
    <property type="molecule type" value="mRNA"/>
</dbReference>
<dbReference type="EMBL" id="CH236947">
    <property type="protein sequence ID" value="EAL24342.1"/>
    <property type="molecule type" value="Genomic_DNA"/>
</dbReference>
<dbReference type="EMBL" id="BC127714">
    <property type="protein sequence ID" value="AAI27715.1"/>
    <property type="molecule type" value="mRNA"/>
</dbReference>
<dbReference type="EMBL" id="BC127715">
    <property type="protein sequence ID" value="AAI27716.1"/>
    <property type="molecule type" value="mRNA"/>
</dbReference>
<dbReference type="EMBL" id="BC136684">
    <property type="protein sequence ID" value="AAI36685.1"/>
    <property type="molecule type" value="mRNA"/>
</dbReference>
<dbReference type="EMBL" id="BC144367">
    <property type="protein sequence ID" value="AAI44368.1"/>
    <property type="molecule type" value="mRNA"/>
</dbReference>
<dbReference type="CCDS" id="CCDS34741.2">
    <molecule id="A0PJY2-1"/>
</dbReference>
<dbReference type="CCDS" id="CCDS55157.1">
    <molecule id="A0PJY2-2"/>
</dbReference>
<dbReference type="RefSeq" id="NP_001019784.2">
    <molecule id="A0PJY2-1"/>
    <property type="nucleotide sequence ID" value="NM_001024613.4"/>
</dbReference>
<dbReference type="RefSeq" id="NP_001153736.1">
    <molecule id="A0PJY2-2"/>
    <property type="nucleotide sequence ID" value="NM_001160264.2"/>
</dbReference>
<dbReference type="RefSeq" id="XP_005250394.1">
    <molecule id="A0PJY2-1"/>
    <property type="nucleotide sequence ID" value="XM_005250337.4"/>
</dbReference>
<dbReference type="RefSeq" id="XP_011514504.1">
    <molecule id="A0PJY2-2"/>
    <property type="nucleotide sequence ID" value="XM_011516202.3"/>
</dbReference>
<dbReference type="RefSeq" id="XP_054214163.1">
    <molecule id="A0PJY2-1"/>
    <property type="nucleotide sequence ID" value="XM_054358188.1"/>
</dbReference>
<dbReference type="RefSeq" id="XP_054214164.1">
    <molecule id="A0PJY2-2"/>
    <property type="nucleotide sequence ID" value="XM_054358189.1"/>
</dbReference>
<dbReference type="SMR" id="A0PJY2"/>
<dbReference type="BioGRID" id="133180">
    <property type="interactions" value="29"/>
</dbReference>
<dbReference type="FunCoup" id="A0PJY2">
    <property type="interactions" value="1246"/>
</dbReference>
<dbReference type="IntAct" id="A0PJY2">
    <property type="interactions" value="26"/>
</dbReference>
<dbReference type="STRING" id="9606.ENSP00000411145"/>
<dbReference type="GlyGen" id="A0PJY2">
    <property type="glycosylation" value="2 sites, 1 O-linked glycan (1 site)"/>
</dbReference>
<dbReference type="iPTMnet" id="A0PJY2"/>
<dbReference type="PhosphoSitePlus" id="A0PJY2"/>
<dbReference type="BioMuta" id="FEZF1"/>
<dbReference type="MassIVE" id="A0PJY2"/>
<dbReference type="PaxDb" id="9606-ENSP00000411145"/>
<dbReference type="PeptideAtlas" id="A0PJY2"/>
<dbReference type="ProteomicsDB" id="71">
    <molecule id="A0PJY2-1"/>
</dbReference>
<dbReference type="ProteomicsDB" id="72">
    <molecule id="A0PJY2-2"/>
</dbReference>
<dbReference type="ProteomicsDB" id="73">
    <molecule id="A0PJY2-3"/>
</dbReference>
<dbReference type="Antibodypedia" id="31725">
    <property type="antibodies" value="106 antibodies from 18 providers"/>
</dbReference>
<dbReference type="DNASU" id="389549"/>
<dbReference type="Ensembl" id="ENST00000427185.2">
    <molecule id="A0PJY2-2"/>
    <property type="protein sequence ID" value="ENSP00000392727.2"/>
    <property type="gene ID" value="ENSG00000128610.12"/>
</dbReference>
<dbReference type="Ensembl" id="ENST00000442488.7">
    <molecule id="A0PJY2-1"/>
    <property type="protein sequence ID" value="ENSP00000411145.2"/>
    <property type="gene ID" value="ENSG00000128610.12"/>
</dbReference>
<dbReference type="GeneID" id="389549"/>
<dbReference type="KEGG" id="hsa:389549"/>
<dbReference type="MANE-Select" id="ENST00000442488.7">
    <property type="protein sequence ID" value="ENSP00000411145.2"/>
    <property type="RefSeq nucleotide sequence ID" value="NM_001024613.4"/>
    <property type="RefSeq protein sequence ID" value="NP_001019784.2"/>
</dbReference>
<dbReference type="UCSC" id="uc003vkc.4">
    <molecule id="A0PJY2-1"/>
    <property type="organism name" value="human"/>
</dbReference>
<dbReference type="AGR" id="HGNC:22788"/>
<dbReference type="CTD" id="389549"/>
<dbReference type="DisGeNET" id="389549"/>
<dbReference type="GeneCards" id="FEZF1"/>
<dbReference type="GeneReviews" id="FEZF1"/>
<dbReference type="HGNC" id="HGNC:22788">
    <property type="gene designation" value="FEZF1"/>
</dbReference>
<dbReference type="HPA" id="ENSG00000128610">
    <property type="expression patterns" value="Tissue enhanced (brain, pituitary gland, testis)"/>
</dbReference>
<dbReference type="MalaCards" id="FEZF1"/>
<dbReference type="MIM" id="613301">
    <property type="type" value="gene"/>
</dbReference>
<dbReference type="MIM" id="616030">
    <property type="type" value="phenotype"/>
</dbReference>
<dbReference type="neXtProt" id="NX_A0PJY2"/>
<dbReference type="OpenTargets" id="ENSG00000128610"/>
<dbReference type="Orphanet" id="478">
    <property type="disease" value="Kallmann syndrome"/>
</dbReference>
<dbReference type="PharmGKB" id="PA162388419"/>
<dbReference type="VEuPathDB" id="HostDB:ENSG00000128610"/>
<dbReference type="eggNOG" id="KOG1721">
    <property type="taxonomic scope" value="Eukaryota"/>
</dbReference>
<dbReference type="GeneTree" id="ENSGT00940000159477"/>
<dbReference type="HOGENOM" id="CLU_021813_2_1_1"/>
<dbReference type="InParanoid" id="A0PJY2"/>
<dbReference type="OMA" id="SQIQHYM"/>
<dbReference type="OrthoDB" id="5062908at2759"/>
<dbReference type="PAN-GO" id="A0PJY2">
    <property type="GO annotations" value="3 GO annotations based on evolutionary models"/>
</dbReference>
<dbReference type="PhylomeDB" id="A0PJY2"/>
<dbReference type="TreeFam" id="TF316780"/>
<dbReference type="PathwayCommons" id="A0PJY2"/>
<dbReference type="SignaLink" id="A0PJY2"/>
<dbReference type="BioGRID-ORCS" id="389549">
    <property type="hits" value="9 hits in 1164 CRISPR screens"/>
</dbReference>
<dbReference type="GenomeRNAi" id="389549"/>
<dbReference type="Pharos" id="A0PJY2">
    <property type="development level" value="Tbio"/>
</dbReference>
<dbReference type="PRO" id="PR:A0PJY2"/>
<dbReference type="Proteomes" id="UP000005640">
    <property type="component" value="Chromosome 7"/>
</dbReference>
<dbReference type="RNAct" id="A0PJY2">
    <property type="molecule type" value="protein"/>
</dbReference>
<dbReference type="Bgee" id="ENSG00000128610">
    <property type="expression patterns" value="Expressed in male germ line stem cell (sensu Vertebrata) in testis and 41 other cell types or tissues"/>
</dbReference>
<dbReference type="ExpressionAtlas" id="A0PJY2">
    <property type="expression patterns" value="baseline and differential"/>
</dbReference>
<dbReference type="GO" id="GO:0005829">
    <property type="term" value="C:cytosol"/>
    <property type="evidence" value="ECO:0000314"/>
    <property type="project" value="HPA"/>
</dbReference>
<dbReference type="GO" id="GO:0005654">
    <property type="term" value="C:nucleoplasm"/>
    <property type="evidence" value="ECO:0000314"/>
    <property type="project" value="HPA"/>
</dbReference>
<dbReference type="GO" id="GO:0003700">
    <property type="term" value="F:DNA-binding transcription factor activity"/>
    <property type="evidence" value="ECO:0000318"/>
    <property type="project" value="GO_Central"/>
</dbReference>
<dbReference type="GO" id="GO:0001227">
    <property type="term" value="F:DNA-binding transcription repressor activity, RNA polymerase II-specific"/>
    <property type="evidence" value="ECO:0007669"/>
    <property type="project" value="Ensembl"/>
</dbReference>
<dbReference type="GO" id="GO:0000978">
    <property type="term" value="F:RNA polymerase II cis-regulatory region sequence-specific DNA binding"/>
    <property type="evidence" value="ECO:0000318"/>
    <property type="project" value="GO_Central"/>
</dbReference>
<dbReference type="GO" id="GO:0008270">
    <property type="term" value="F:zinc ion binding"/>
    <property type="evidence" value="ECO:0007669"/>
    <property type="project" value="UniProtKB-KW"/>
</dbReference>
<dbReference type="GO" id="GO:0007411">
    <property type="term" value="P:axon guidance"/>
    <property type="evidence" value="ECO:0007669"/>
    <property type="project" value="Ensembl"/>
</dbReference>
<dbReference type="GO" id="GO:0043697">
    <property type="term" value="P:cell dedifferentiation"/>
    <property type="evidence" value="ECO:0007669"/>
    <property type="project" value="Ensembl"/>
</dbReference>
<dbReference type="GO" id="GO:0021953">
    <property type="term" value="P:central nervous system neuron differentiation"/>
    <property type="evidence" value="ECO:0007669"/>
    <property type="project" value="Ensembl"/>
</dbReference>
<dbReference type="GO" id="GO:0021797">
    <property type="term" value="P:forebrain anterior/posterior pattern specification"/>
    <property type="evidence" value="ECO:0007669"/>
    <property type="project" value="Ensembl"/>
</dbReference>
<dbReference type="GO" id="GO:1904936">
    <property type="term" value="P:interneuron migration"/>
    <property type="evidence" value="ECO:0007669"/>
    <property type="project" value="Ensembl"/>
</dbReference>
<dbReference type="GO" id="GO:0008285">
    <property type="term" value="P:negative regulation of cell population proliferation"/>
    <property type="evidence" value="ECO:0007669"/>
    <property type="project" value="Ensembl"/>
</dbReference>
<dbReference type="GO" id="GO:0021772">
    <property type="term" value="P:olfactory bulb development"/>
    <property type="evidence" value="ECO:0007669"/>
    <property type="project" value="Ensembl"/>
</dbReference>
<dbReference type="GO" id="GO:0045893">
    <property type="term" value="P:positive regulation of DNA-templated transcription"/>
    <property type="evidence" value="ECO:0007669"/>
    <property type="project" value="Ensembl"/>
</dbReference>
<dbReference type="GO" id="GO:0045666">
    <property type="term" value="P:positive regulation of neuron differentiation"/>
    <property type="evidence" value="ECO:0007669"/>
    <property type="project" value="Ensembl"/>
</dbReference>
<dbReference type="GO" id="GO:0050767">
    <property type="term" value="P:regulation of neurogenesis"/>
    <property type="evidence" value="ECO:0007669"/>
    <property type="project" value="Ensembl"/>
</dbReference>
<dbReference type="GO" id="GO:0006357">
    <property type="term" value="P:regulation of transcription by RNA polymerase II"/>
    <property type="evidence" value="ECO:0000318"/>
    <property type="project" value="GO_Central"/>
</dbReference>
<dbReference type="FunFam" id="3.30.160.60:FF:000103">
    <property type="entry name" value="FEZ family zinc finger 1"/>
    <property type="match status" value="1"/>
</dbReference>
<dbReference type="FunFam" id="3.30.160.60:FF:000251">
    <property type="entry name" value="FEZ family zinc finger 2"/>
    <property type="match status" value="1"/>
</dbReference>
<dbReference type="FunFam" id="3.30.160.60:FF:000227">
    <property type="entry name" value="fez family zinc finger protein 1"/>
    <property type="match status" value="1"/>
</dbReference>
<dbReference type="FunFam" id="3.30.160.60:FF:000164">
    <property type="entry name" value="Fez family zinc finger protein 2"/>
    <property type="match status" value="1"/>
</dbReference>
<dbReference type="FunFam" id="3.30.160.60:FF:000194">
    <property type="entry name" value="Fez family zinc finger protein 2"/>
    <property type="match status" value="1"/>
</dbReference>
<dbReference type="FunFam" id="3.30.160.60:FF:000863">
    <property type="entry name" value="fez family zinc finger protein 2"/>
    <property type="match status" value="1"/>
</dbReference>
<dbReference type="Gene3D" id="3.30.160.60">
    <property type="entry name" value="Classic Zinc Finger"/>
    <property type="match status" value="6"/>
</dbReference>
<dbReference type="InterPro" id="IPR036236">
    <property type="entry name" value="Znf_C2H2_sf"/>
</dbReference>
<dbReference type="InterPro" id="IPR013087">
    <property type="entry name" value="Znf_C2H2_type"/>
</dbReference>
<dbReference type="PANTHER" id="PTHR24394">
    <property type="entry name" value="ZINC FINGER PROTEIN"/>
    <property type="match status" value="1"/>
</dbReference>
<dbReference type="PANTHER" id="PTHR24394:SF48">
    <property type="entry name" value="ZINC FINGER PROTEIN 771"/>
    <property type="match status" value="1"/>
</dbReference>
<dbReference type="Pfam" id="PF00096">
    <property type="entry name" value="zf-C2H2"/>
    <property type="match status" value="5"/>
</dbReference>
<dbReference type="Pfam" id="PF13912">
    <property type="entry name" value="zf-C2H2_6"/>
    <property type="match status" value="1"/>
</dbReference>
<dbReference type="SMART" id="SM00355">
    <property type="entry name" value="ZnF_C2H2"/>
    <property type="match status" value="6"/>
</dbReference>
<dbReference type="SUPFAM" id="SSF57667">
    <property type="entry name" value="beta-beta-alpha zinc fingers"/>
    <property type="match status" value="3"/>
</dbReference>
<dbReference type="PROSITE" id="PS00028">
    <property type="entry name" value="ZINC_FINGER_C2H2_1"/>
    <property type="match status" value="6"/>
</dbReference>
<dbReference type="PROSITE" id="PS50157">
    <property type="entry name" value="ZINC_FINGER_C2H2_2"/>
    <property type="match status" value="6"/>
</dbReference>
<comment type="function">
    <text evidence="1">Transcription repressor. Involved in the axonal projection and proper termination of olfactory sensory neurons (OSN). Plays a role in rostro-caudal patterning of the diencephalon and in prethalamic formation. Expression is required in OSN to cell-autonomously regulate OSN axon projections. Regulates non-cell-autonomously the layer formation of the olfactory bulb development and the interneurons. May be required for correct rostral migration of the interneuron progenitors (By similarity).</text>
</comment>
<comment type="interaction">
    <interactant intactId="EBI-11988727">
        <id>A0PJY2</id>
    </interactant>
    <interactant intactId="EBI-3867333">
        <id>A8MQ03</id>
        <label>CYSRT1</label>
    </interactant>
    <organismsDiffer>false</organismsDiffer>
    <experiments>3</experiments>
</comment>
<comment type="interaction">
    <interactant intactId="EBI-11988727">
        <id>A0PJY2</id>
    </interactant>
    <interactant intactId="EBI-750641">
        <id>Q5TD97</id>
        <label>FHL5</label>
    </interactant>
    <organismsDiffer>false</organismsDiffer>
    <experiments>3</experiments>
</comment>
<comment type="interaction">
    <interactant intactId="EBI-11988727">
        <id>A0PJY2</id>
    </interactant>
    <interactant intactId="EBI-10171697">
        <id>Q6A162</id>
        <label>KRT40</label>
    </interactant>
    <organismsDiffer>false</organismsDiffer>
    <experiments>3</experiments>
</comment>
<comment type="interaction">
    <interactant intactId="EBI-11988727">
        <id>A0PJY2</id>
    </interactant>
    <interactant intactId="EBI-11959885">
        <id>Q07627</id>
        <label>KRTAP1-1</label>
    </interactant>
    <organismsDiffer>false</organismsDiffer>
    <experiments>3</experiments>
</comment>
<comment type="interaction">
    <interactant intactId="EBI-11988727">
        <id>A0PJY2</id>
    </interactant>
    <interactant intactId="EBI-10171774">
        <id>P60410</id>
        <label>KRTAP10-8</label>
    </interactant>
    <organismsDiffer>false</organismsDiffer>
    <experiments>3</experiments>
</comment>
<comment type="interaction">
    <interactant intactId="EBI-11988727">
        <id>A0PJY2</id>
    </interactant>
    <interactant intactId="EBI-724076">
        <id>Q99750</id>
        <label>MDFI</label>
    </interactant>
    <organismsDiffer>false</organismsDiffer>
    <experiments>3</experiments>
</comment>
<comment type="subcellular location">
    <subcellularLocation>
        <location evidence="4">Nucleus</location>
    </subcellularLocation>
</comment>
<comment type="alternative products">
    <event type="alternative splicing"/>
    <isoform>
        <id>A0PJY2-1</id>
        <name>1</name>
        <sequence type="displayed"/>
    </isoform>
    <isoform>
        <id>A0PJY2-2</id>
        <name>2</name>
        <sequence type="described" ref="VSP_026732"/>
    </isoform>
    <isoform>
        <id>A0PJY2-3</id>
        <name>3</name>
        <sequence type="described" ref="VSP_026733"/>
    </isoform>
</comment>
<comment type="tissue specificity">
    <text evidence="4">Expressed in brain. Little or no expression in other tissues. Overexpressed specifically in gastric cancers. A 2- to 20-fold increase is found in over 50% of gastric cancer tissues.</text>
</comment>
<comment type="disease" evidence="5">
    <disease id="DI-04228">
        <name>Hypogonadotropic hypogonadism 22 with or without anosmia</name>
        <acronym>HH22</acronym>
        <description>A disorder characterized by absent or incomplete sexual maturation by the age of 18 years, in conjunction with low levels of circulating gonadotropins and testosterone and no other abnormalities of the hypothalamic-pituitary axis. In some cases, it is associated with non-reproductive phenotypes, such as anosmia, cleft palate, and sensorineural hearing loss. Anosmia or hyposmia is related to the absence or hypoplasia of the olfactory bulbs and tracts. Hypogonadism is due to deficiency in gonadotropin-releasing hormone and probably results from a failure of embryonic migration of gonadotropin-releasing hormone-synthesizing neurons. In the presence of anosmia, idiopathic hypogonadotropic hypogonadism is referred to as Kallmann syndrome, whereas in the presence of a normal sense of smell, it has been termed normosmic idiopathic hypogonadotropic hypogonadism (nIHH).</description>
        <dbReference type="MIM" id="616030"/>
    </disease>
    <text>The disease is caused by variants affecting the gene represented in this entry.</text>
</comment>
<comment type="miscellaneous">
    <text>Triggers oncogenic activity specifically in gastric tumors through activation of KRAS in the ERK signaling pathway.</text>
</comment>
<comment type="similarity">
    <text evidence="7">Belongs to the krueppel C2H2-type zinc-finger protein family.</text>
</comment>
<sequence length="475" mass="52038">MDSSCHNATTKMLATAPARGNMMSTSKPLAFSIERIMARTPEPKALPVPHFLQGALPKGEPKHSLHLNSSIPCMIPFVPVAYDTSPKAGVTGSEPRKASLEAPAAPAAVPSAPAFSCSDLLNCALSLKGDLARDALPLQQYKLVRPRVVNHSSFHAMGALCYLNRGDGPCHPAAGVNIHPVASYFLSSPLHPQPKTYLAERNKLVVPAVEKYPSGVAFKDLSQAQLQHYMKESAQLLSEKIAFKTSDFSRGSPNAKPKVFTCEVCGKVFNAHYNLTRHMPVHTGARPFVCKVCGKGFRQASTLCRHKIIHTQEKPHKCNQCGKAFNRSSTLNTHTRIHAGYKPFVCEFCGKGFHQKGNYKNHKLTHSGEKQFKCNICNKAFHQVYNLTFHMHTHNDKKPFTCPTCGKGFCRNFDLKKHVRKLHDSSLGLARTPAGEPGTEPPPPLPQQPPMTLPPLQPPLPTPGPLQPGLHQGHQ</sequence>
<gene>
    <name type="primary">FEZF1</name>
    <name type="synonym">FEZ</name>
    <name type="synonym">ZNF312B</name>
</gene>
<feature type="chain" id="PRO_0000295114" description="Fez family zinc finger protein 1">
    <location>
        <begin position="1"/>
        <end position="475"/>
    </location>
</feature>
<feature type="zinc finger region" description="C2H2-type 1" evidence="2">
    <location>
        <begin position="260"/>
        <end position="282"/>
    </location>
</feature>
<feature type="zinc finger region" description="C2H2-type 2" evidence="2">
    <location>
        <begin position="288"/>
        <end position="310"/>
    </location>
</feature>
<feature type="zinc finger region" description="C2H2-type 3" evidence="2">
    <location>
        <begin position="316"/>
        <end position="338"/>
    </location>
</feature>
<feature type="zinc finger region" description="C2H2-type 4" evidence="2">
    <location>
        <begin position="344"/>
        <end position="366"/>
    </location>
</feature>
<feature type="zinc finger region" description="C2H2-type 5" evidence="2">
    <location>
        <begin position="372"/>
        <end position="394"/>
    </location>
</feature>
<feature type="zinc finger region" description="C2H2-type 6" evidence="2">
    <location>
        <begin position="400"/>
        <end position="423"/>
    </location>
</feature>
<feature type="region of interest" description="Disordered" evidence="3">
    <location>
        <begin position="428"/>
        <end position="475"/>
    </location>
</feature>
<feature type="short sequence motif" description="Engrailed homology 1 repressor" evidence="1">
    <location>
        <begin position="28"/>
        <end position="43"/>
    </location>
</feature>
<feature type="compositionally biased region" description="Pro residues" evidence="3">
    <location>
        <begin position="439"/>
        <end position="466"/>
    </location>
</feature>
<feature type="splice variant" id="VSP_026732" description="In isoform 2." evidence="6">
    <location>
        <begin position="144"/>
        <end position="193"/>
    </location>
</feature>
<feature type="splice variant" id="VSP_026733" description="In isoform 3." evidence="7">
    <location>
        <begin position="265"/>
        <end position="268"/>
    </location>
</feature>
<feature type="sequence variant" id="VAR_071918" description="In HH22; partial loss of function; dbSNP:rs587777739." evidence="5">
    <original>H</original>
    <variation>Y</variation>
    <location>
        <position position="278"/>
    </location>
</feature>
<protein>
    <recommendedName>
        <fullName>Fez family zinc finger protein 1</fullName>
    </recommendedName>
    <alternativeName>
        <fullName>Zinc finger protein 312B</fullName>
    </alternativeName>
</protein>
<name>FEZF1_HUMAN</name>
<organism>
    <name type="scientific">Homo sapiens</name>
    <name type="common">Human</name>
    <dbReference type="NCBI Taxonomy" id="9606"/>
    <lineage>
        <taxon>Eukaryota</taxon>
        <taxon>Metazoa</taxon>
        <taxon>Chordata</taxon>
        <taxon>Craniata</taxon>
        <taxon>Vertebrata</taxon>
        <taxon>Euteleostomi</taxon>
        <taxon>Mammalia</taxon>
        <taxon>Eutheria</taxon>
        <taxon>Euarchontoglires</taxon>
        <taxon>Primates</taxon>
        <taxon>Haplorrhini</taxon>
        <taxon>Catarrhini</taxon>
        <taxon>Hominidae</taxon>
        <taxon>Homo</taxon>
    </lineage>
</organism>
<reference key="1">
    <citation type="journal article" date="2004" name="Nat. Genet.">
        <title>Complete sequencing and characterization of 21,243 full-length human cDNAs.</title>
        <authorList>
            <person name="Ota T."/>
            <person name="Suzuki Y."/>
            <person name="Nishikawa T."/>
            <person name="Otsuki T."/>
            <person name="Sugiyama T."/>
            <person name="Irie R."/>
            <person name="Wakamatsu A."/>
            <person name="Hayashi K."/>
            <person name="Sato H."/>
            <person name="Nagai K."/>
            <person name="Kimura K."/>
            <person name="Makita H."/>
            <person name="Sekine M."/>
            <person name="Obayashi M."/>
            <person name="Nishi T."/>
            <person name="Shibahara T."/>
            <person name="Tanaka T."/>
            <person name="Ishii S."/>
            <person name="Yamamoto J."/>
            <person name="Saito K."/>
            <person name="Kawai Y."/>
            <person name="Isono Y."/>
            <person name="Nakamura Y."/>
            <person name="Nagahari K."/>
            <person name="Murakami K."/>
            <person name="Yasuda T."/>
            <person name="Iwayanagi T."/>
            <person name="Wagatsuma M."/>
            <person name="Shiratori A."/>
            <person name="Sudo H."/>
            <person name="Hosoiri T."/>
            <person name="Kaku Y."/>
            <person name="Kodaira H."/>
            <person name="Kondo H."/>
            <person name="Sugawara M."/>
            <person name="Takahashi M."/>
            <person name="Kanda K."/>
            <person name="Yokoi T."/>
            <person name="Furuya T."/>
            <person name="Kikkawa E."/>
            <person name="Omura Y."/>
            <person name="Abe K."/>
            <person name="Kamihara K."/>
            <person name="Katsuta N."/>
            <person name="Sato K."/>
            <person name="Tanikawa M."/>
            <person name="Yamazaki M."/>
            <person name="Ninomiya K."/>
            <person name="Ishibashi T."/>
            <person name="Yamashita H."/>
            <person name="Murakawa K."/>
            <person name="Fujimori K."/>
            <person name="Tanai H."/>
            <person name="Kimata M."/>
            <person name="Watanabe M."/>
            <person name="Hiraoka S."/>
            <person name="Chiba Y."/>
            <person name="Ishida S."/>
            <person name="Ono Y."/>
            <person name="Takiguchi S."/>
            <person name="Watanabe S."/>
            <person name="Yosida M."/>
            <person name="Hotuta T."/>
            <person name="Kusano J."/>
            <person name="Kanehori K."/>
            <person name="Takahashi-Fujii A."/>
            <person name="Hara H."/>
            <person name="Tanase T.-O."/>
            <person name="Nomura Y."/>
            <person name="Togiya S."/>
            <person name="Komai F."/>
            <person name="Hara R."/>
            <person name="Takeuchi K."/>
            <person name="Arita M."/>
            <person name="Imose N."/>
            <person name="Musashino K."/>
            <person name="Yuuki H."/>
            <person name="Oshima A."/>
            <person name="Sasaki N."/>
            <person name="Aotsuka S."/>
            <person name="Yoshikawa Y."/>
            <person name="Matsunawa H."/>
            <person name="Ichihara T."/>
            <person name="Shiohata N."/>
            <person name="Sano S."/>
            <person name="Moriya S."/>
            <person name="Momiyama H."/>
            <person name="Satoh N."/>
            <person name="Takami S."/>
            <person name="Terashima Y."/>
            <person name="Suzuki O."/>
            <person name="Nakagawa S."/>
            <person name="Senoh A."/>
            <person name="Mizoguchi H."/>
            <person name="Goto Y."/>
            <person name="Shimizu F."/>
            <person name="Wakebe H."/>
            <person name="Hishigaki H."/>
            <person name="Watanabe T."/>
            <person name="Sugiyama A."/>
            <person name="Takemoto M."/>
            <person name="Kawakami B."/>
            <person name="Yamazaki M."/>
            <person name="Watanabe K."/>
            <person name="Kumagai A."/>
            <person name="Itakura S."/>
            <person name="Fukuzumi Y."/>
            <person name="Fujimori Y."/>
            <person name="Komiyama M."/>
            <person name="Tashiro H."/>
            <person name="Tanigami A."/>
            <person name="Fujiwara T."/>
            <person name="Ono T."/>
            <person name="Yamada K."/>
            <person name="Fujii Y."/>
            <person name="Ozaki K."/>
            <person name="Hirao M."/>
            <person name="Ohmori Y."/>
            <person name="Kawabata A."/>
            <person name="Hikiji T."/>
            <person name="Kobatake N."/>
            <person name="Inagaki H."/>
            <person name="Ikema Y."/>
            <person name="Okamoto S."/>
            <person name="Okitani R."/>
            <person name="Kawakami T."/>
            <person name="Noguchi S."/>
            <person name="Itoh T."/>
            <person name="Shigeta K."/>
            <person name="Senba T."/>
            <person name="Matsumura K."/>
            <person name="Nakajima Y."/>
            <person name="Mizuno T."/>
            <person name="Morinaga M."/>
            <person name="Sasaki M."/>
            <person name="Togashi T."/>
            <person name="Oyama M."/>
            <person name="Hata H."/>
            <person name="Watanabe M."/>
            <person name="Komatsu T."/>
            <person name="Mizushima-Sugano J."/>
            <person name="Satoh T."/>
            <person name="Shirai Y."/>
            <person name="Takahashi Y."/>
            <person name="Nakagawa K."/>
            <person name="Okumura K."/>
            <person name="Nagase T."/>
            <person name="Nomura N."/>
            <person name="Kikuchi H."/>
            <person name="Masuho Y."/>
            <person name="Yamashita R."/>
            <person name="Nakai K."/>
            <person name="Yada T."/>
            <person name="Nakamura Y."/>
            <person name="Ohara O."/>
            <person name="Isogai T."/>
            <person name="Sugano S."/>
        </authorList>
    </citation>
    <scope>NUCLEOTIDE SEQUENCE [LARGE SCALE MRNA] (ISOFORM 1)</scope>
</reference>
<reference key="2">
    <citation type="journal article" date="2003" name="Science">
        <title>Human chromosome 7: DNA sequence and biology.</title>
        <authorList>
            <person name="Scherer S.W."/>
            <person name="Cheung J."/>
            <person name="MacDonald J.R."/>
            <person name="Osborne L.R."/>
            <person name="Nakabayashi K."/>
            <person name="Herbrick J.-A."/>
            <person name="Carson A.R."/>
            <person name="Parker-Katiraee L."/>
            <person name="Skaug J."/>
            <person name="Khaja R."/>
            <person name="Zhang J."/>
            <person name="Hudek A.K."/>
            <person name="Li M."/>
            <person name="Haddad M."/>
            <person name="Duggan G.E."/>
            <person name="Fernandez B.A."/>
            <person name="Kanematsu E."/>
            <person name="Gentles S."/>
            <person name="Christopoulos C.C."/>
            <person name="Choufani S."/>
            <person name="Kwasnicka D."/>
            <person name="Zheng X.H."/>
            <person name="Lai Z."/>
            <person name="Nusskern D.R."/>
            <person name="Zhang Q."/>
            <person name="Gu Z."/>
            <person name="Lu F."/>
            <person name="Zeesman S."/>
            <person name="Nowaczyk M.J."/>
            <person name="Teshima I."/>
            <person name="Chitayat D."/>
            <person name="Shuman C."/>
            <person name="Weksberg R."/>
            <person name="Zackai E.H."/>
            <person name="Grebe T.A."/>
            <person name="Cox S.R."/>
            <person name="Kirkpatrick S.J."/>
            <person name="Rahman N."/>
            <person name="Friedman J.M."/>
            <person name="Heng H.H.Q."/>
            <person name="Pelicci P.G."/>
            <person name="Lo-Coco F."/>
            <person name="Belloni E."/>
            <person name="Shaffer L.G."/>
            <person name="Pober B."/>
            <person name="Morton C.C."/>
            <person name="Gusella J.F."/>
            <person name="Bruns G.A.P."/>
            <person name="Korf B.R."/>
            <person name="Quade B.J."/>
            <person name="Ligon A.H."/>
            <person name="Ferguson H."/>
            <person name="Higgins A.W."/>
            <person name="Leach N.T."/>
            <person name="Herrick S.R."/>
            <person name="Lemyre E."/>
            <person name="Farra C.G."/>
            <person name="Kim H.-G."/>
            <person name="Summers A.M."/>
            <person name="Gripp K.W."/>
            <person name="Roberts W."/>
            <person name="Szatmari P."/>
            <person name="Winsor E.J.T."/>
            <person name="Grzeschik K.-H."/>
            <person name="Teebi A."/>
            <person name="Minassian B.A."/>
            <person name="Kere J."/>
            <person name="Armengol L."/>
            <person name="Pujana M.A."/>
            <person name="Estivill X."/>
            <person name="Wilson M.D."/>
            <person name="Koop B.F."/>
            <person name="Tosi S."/>
            <person name="Moore G.E."/>
            <person name="Boright A.P."/>
            <person name="Zlotorynski E."/>
            <person name="Kerem B."/>
            <person name="Kroisel P.M."/>
            <person name="Petek E."/>
            <person name="Oscier D.G."/>
            <person name="Mould S.J."/>
            <person name="Doehner H."/>
            <person name="Doehner K."/>
            <person name="Rommens J.M."/>
            <person name="Vincent J.B."/>
            <person name="Venter J.C."/>
            <person name="Li P.W."/>
            <person name="Mural R.J."/>
            <person name="Adams M.D."/>
            <person name="Tsui L.-C."/>
        </authorList>
    </citation>
    <scope>NUCLEOTIDE SEQUENCE [LARGE SCALE GENOMIC DNA]</scope>
</reference>
<reference key="3">
    <citation type="journal article" date="2004" name="Genome Res.">
        <title>The status, quality, and expansion of the NIH full-length cDNA project: the Mammalian Gene Collection (MGC).</title>
        <authorList>
            <consortium name="The MGC Project Team"/>
        </authorList>
    </citation>
    <scope>NUCLEOTIDE SEQUENCE [LARGE SCALE MRNA] (ISOFORMS 1 AND 2)</scope>
    <source>
        <tissue>Brain</tissue>
        <tissue>Testis</tissue>
    </source>
</reference>
<reference key="4">
    <citation type="journal article" date="2009" name="Cancer Res.">
        <title>Human ZNF312b promotes the progression of gastric cancer by transcriptional activation of the K-ras gene.</title>
        <authorList>
            <person name="Song I.S."/>
            <person name="Oh N.S."/>
            <person name="Kim H.T."/>
            <person name="Ha G.H."/>
            <person name="Jeong S.Y."/>
            <person name="Kim J.M."/>
            <person name="Kim D.I."/>
            <person name="Yoo H.S."/>
            <person name="Kim C.H."/>
            <person name="Kim N.S."/>
        </authorList>
    </citation>
    <scope>TISSUE SPECIFICITY</scope>
    <scope>SUBCELLULAR LOCATION</scope>
</reference>
<reference key="5">
    <citation type="journal article" date="2014" name="Am. J. Hum. Genet.">
        <title>Mutations in FEZF1 cause Kallmann syndrome.</title>
        <authorList>
            <person name="Kotan L.D."/>
            <person name="Hutchins B.I."/>
            <person name="Ozkan Y."/>
            <person name="Demirel F."/>
            <person name="Stoner H."/>
            <person name="Cheng P.J."/>
            <person name="Esen I."/>
            <person name="Gurbuz F."/>
            <person name="Bicakci Y.K."/>
            <person name="Mengen E."/>
            <person name="Yuksel B."/>
            <person name="Wray S."/>
            <person name="Topaloglu A.K."/>
        </authorList>
    </citation>
    <scope>INVOLVEMENT IN HH22</scope>
    <scope>VARIANT HH22 TYR-278</scope>
    <scope>CHARACTERIZATION OF VARIANT HH22 TYR-278</scope>
</reference>
<accession>A0PJY2</accession>
<accession>A0PJY3</accession>
<accession>A4D0W3</accession>
<accession>B4DUP9</accession>
<accession>B7ZM98</accession>
<proteinExistence type="evidence at protein level"/>